<name>RL26_MACFA</name>
<accession>P61256</accession>
<proteinExistence type="evidence at transcript level"/>
<evidence type="ECO:0000250" key="1">
    <source>
        <dbReference type="UniProtKB" id="P61254"/>
    </source>
</evidence>
<evidence type="ECO:0000256" key="2">
    <source>
        <dbReference type="SAM" id="MobiDB-lite"/>
    </source>
</evidence>
<evidence type="ECO:0000305" key="3"/>
<comment type="function">
    <text evidence="1">Component of the large ribosomal subunit. The ribosome is a large ribonucleoprotein complex responsible for the synthesis of proteins in the cell.</text>
</comment>
<comment type="subunit">
    <text evidence="1">Component of the large ribosomal subunit. Interacts with DHX33.</text>
</comment>
<comment type="subcellular location">
    <subcellularLocation>
        <location evidence="1">Cytoplasm</location>
    </subcellularLocation>
</comment>
<comment type="PTM">
    <text evidence="1">Ufmylated by UFL1 in response to endoplasmic reticulum stress, promoting reticulophagy of endoplasmic reticulum sheets.</text>
</comment>
<comment type="similarity">
    <text evidence="3">Belongs to the universal ribosomal protein uL24 family.</text>
</comment>
<gene>
    <name type="primary">RPL26</name>
    <name type="ORF">QbsB-11436</name>
</gene>
<dbReference type="EMBL" id="AB093679">
    <property type="protein sequence ID" value="BAC21653.1"/>
    <property type="molecule type" value="mRNA"/>
</dbReference>
<dbReference type="RefSeq" id="XP_005582914.1">
    <property type="nucleotide sequence ID" value="XM_005582857.3"/>
</dbReference>
<dbReference type="RefSeq" id="XP_015293116.1">
    <property type="nucleotide sequence ID" value="XM_015437630.1"/>
</dbReference>
<dbReference type="RefSeq" id="XP_065388815.1">
    <property type="nucleotide sequence ID" value="XM_065532743.1"/>
</dbReference>
<dbReference type="SMR" id="P61256"/>
<dbReference type="STRING" id="9541.ENSMFAP00000001392"/>
<dbReference type="Ensembl" id="ENSMFAT00000029569.2">
    <property type="protein sequence ID" value="ENSMFAP00000001392.1"/>
    <property type="gene ID" value="ENSMFAG00000037250.2"/>
</dbReference>
<dbReference type="GeneID" id="102127561"/>
<dbReference type="KEGG" id="mcf:102140788"/>
<dbReference type="CTD" id="6154"/>
<dbReference type="VEuPathDB" id="HostDB:ENSMFAG00000029875"/>
<dbReference type="VEuPathDB" id="HostDB:ENSMFAG00000037250"/>
<dbReference type="eggNOG" id="KOG3401">
    <property type="taxonomic scope" value="Eukaryota"/>
</dbReference>
<dbReference type="GeneTree" id="ENSGT00390000014165"/>
<dbReference type="OMA" id="VRIMRGD"/>
<dbReference type="OrthoDB" id="11521at314294"/>
<dbReference type="Proteomes" id="UP000233100">
    <property type="component" value="Chromosome 16"/>
</dbReference>
<dbReference type="Bgee" id="ENSMFAG00000037250">
    <property type="expression patterns" value="Expressed in lymph node and 13 other cell types or tissues"/>
</dbReference>
<dbReference type="GO" id="GO:0022625">
    <property type="term" value="C:cytosolic large ribosomal subunit"/>
    <property type="evidence" value="ECO:0007669"/>
    <property type="project" value="Ensembl"/>
</dbReference>
<dbReference type="GO" id="GO:0005730">
    <property type="term" value="C:nucleolus"/>
    <property type="evidence" value="ECO:0007669"/>
    <property type="project" value="Ensembl"/>
</dbReference>
<dbReference type="GO" id="GO:0005654">
    <property type="term" value="C:nucleoplasm"/>
    <property type="evidence" value="ECO:0007669"/>
    <property type="project" value="Ensembl"/>
</dbReference>
<dbReference type="GO" id="GO:0048027">
    <property type="term" value="F:mRNA 5'-UTR binding"/>
    <property type="evidence" value="ECO:0007669"/>
    <property type="project" value="Ensembl"/>
</dbReference>
<dbReference type="GO" id="GO:0003735">
    <property type="term" value="F:structural constituent of ribosome"/>
    <property type="evidence" value="ECO:0007669"/>
    <property type="project" value="Ensembl"/>
</dbReference>
<dbReference type="GO" id="GO:0071480">
    <property type="term" value="P:cellular response to gamma radiation"/>
    <property type="evidence" value="ECO:0007669"/>
    <property type="project" value="Ensembl"/>
</dbReference>
<dbReference type="GO" id="GO:0030330">
    <property type="term" value="P:DNA damage response, signal transduction by p53 class mediator"/>
    <property type="evidence" value="ECO:0007669"/>
    <property type="project" value="Ensembl"/>
</dbReference>
<dbReference type="GO" id="GO:0043517">
    <property type="term" value="P:positive regulation of DNA damage response, signal transduction by p53 class mediator"/>
    <property type="evidence" value="ECO:0007669"/>
    <property type="project" value="Ensembl"/>
</dbReference>
<dbReference type="GO" id="GO:1902167">
    <property type="term" value="P:positive regulation of intrinsic apoptotic signaling pathway in response to DNA damage by p53 class mediator"/>
    <property type="evidence" value="ECO:0007669"/>
    <property type="project" value="Ensembl"/>
</dbReference>
<dbReference type="GO" id="GO:0045727">
    <property type="term" value="P:positive regulation of translation"/>
    <property type="evidence" value="ECO:0007669"/>
    <property type="project" value="Ensembl"/>
</dbReference>
<dbReference type="GO" id="GO:1904803">
    <property type="term" value="P:regulation of translation involved in cellular response to UV"/>
    <property type="evidence" value="ECO:0007669"/>
    <property type="project" value="Ensembl"/>
</dbReference>
<dbReference type="GO" id="GO:0042273">
    <property type="term" value="P:ribosomal large subunit biogenesis"/>
    <property type="evidence" value="ECO:0007669"/>
    <property type="project" value="Ensembl"/>
</dbReference>
<dbReference type="GO" id="GO:0006364">
    <property type="term" value="P:rRNA processing"/>
    <property type="evidence" value="ECO:0007669"/>
    <property type="project" value="Ensembl"/>
</dbReference>
<dbReference type="GO" id="GO:0006412">
    <property type="term" value="P:translation"/>
    <property type="evidence" value="ECO:0007669"/>
    <property type="project" value="InterPro"/>
</dbReference>
<dbReference type="CDD" id="cd06089">
    <property type="entry name" value="KOW_RPL26"/>
    <property type="match status" value="1"/>
</dbReference>
<dbReference type="FunFam" id="2.30.30.30:FF:000009">
    <property type="entry name" value="60S ribosomal protein L26"/>
    <property type="match status" value="1"/>
</dbReference>
<dbReference type="Gene3D" id="2.30.30.30">
    <property type="match status" value="1"/>
</dbReference>
<dbReference type="HAMAP" id="MF_01326_A">
    <property type="entry name" value="Ribosomal_uL24_A"/>
    <property type="match status" value="1"/>
</dbReference>
<dbReference type="InterPro" id="IPR005824">
    <property type="entry name" value="KOW"/>
</dbReference>
<dbReference type="InterPro" id="IPR014722">
    <property type="entry name" value="Rib_uL2_dom2"/>
</dbReference>
<dbReference type="InterPro" id="IPR005825">
    <property type="entry name" value="Ribosomal_uL24_CS"/>
</dbReference>
<dbReference type="InterPro" id="IPR005756">
    <property type="entry name" value="Ribosomal_uL24_euk/arc"/>
</dbReference>
<dbReference type="InterPro" id="IPR041988">
    <property type="entry name" value="Ribosomal_uL24_KOW"/>
</dbReference>
<dbReference type="InterPro" id="IPR008991">
    <property type="entry name" value="Translation_prot_SH3-like_sf"/>
</dbReference>
<dbReference type="NCBIfam" id="TIGR01080">
    <property type="entry name" value="rplX_A_E"/>
    <property type="match status" value="1"/>
</dbReference>
<dbReference type="PANTHER" id="PTHR11143">
    <property type="entry name" value="60S RIBOSOMAL PROTEIN L26 FAMILY MEMBER"/>
    <property type="match status" value="1"/>
</dbReference>
<dbReference type="Pfam" id="PF00467">
    <property type="entry name" value="KOW"/>
    <property type="match status" value="1"/>
</dbReference>
<dbReference type="Pfam" id="PF16906">
    <property type="entry name" value="Ribosomal_L26"/>
    <property type="match status" value="1"/>
</dbReference>
<dbReference type="SMART" id="SM00739">
    <property type="entry name" value="KOW"/>
    <property type="match status" value="1"/>
</dbReference>
<dbReference type="SUPFAM" id="SSF50104">
    <property type="entry name" value="Translation proteins SH3-like domain"/>
    <property type="match status" value="1"/>
</dbReference>
<dbReference type="PROSITE" id="PS01108">
    <property type="entry name" value="RIBOSOMAL_L24"/>
    <property type="match status" value="1"/>
</dbReference>
<reference key="1">
    <citation type="journal article" date="2001" name="Gene">
        <title>Assignment of 118 novel cDNAs of cynomolgus monkey brain to human chromosomes.</title>
        <authorList>
            <person name="Osada N."/>
            <person name="Hida M."/>
            <person name="Kususda J."/>
            <person name="Tanuma R."/>
            <person name="Iseki K."/>
            <person name="Hirata M."/>
            <person name="Suto Y."/>
            <person name="Hirai M."/>
            <person name="Terao K."/>
            <person name="Suzuki Y."/>
            <person name="Sugano S."/>
            <person name="Hashimoto K."/>
        </authorList>
    </citation>
    <scope>NUCLEOTIDE SEQUENCE [LARGE SCALE MRNA]</scope>
    <source>
        <tissue>Brain stem</tissue>
    </source>
</reference>
<reference key="2">
    <citation type="journal article" date="2001" name="Gene">
        <authorList>
            <person name="Osada N."/>
            <person name="Hida M."/>
            <person name="Kusuda J."/>
            <person name="Tanuma R."/>
            <person name="Iseki K."/>
            <person name="Hirata M."/>
            <person name="Suto Y."/>
            <person name="Hirai M."/>
            <person name="Terao K."/>
            <person name="Suzuki Y."/>
            <person name="Sugano S."/>
            <person name="Hashimoto K."/>
            <person name="Kususda J."/>
        </authorList>
    </citation>
    <scope>ERRATUM OF PUBMED:11574149</scope>
</reference>
<protein>
    <recommendedName>
        <fullName evidence="3">Large ribosomal subunit protein uL24</fullName>
    </recommendedName>
    <alternativeName>
        <fullName>60S ribosomal protein L26</fullName>
    </alternativeName>
</protein>
<feature type="chain" id="PRO_0000130788" description="Large ribosomal subunit protein uL24">
    <location>
        <begin position="1"/>
        <end position="145"/>
    </location>
</feature>
<feature type="region of interest" description="Disordered" evidence="2">
    <location>
        <begin position="1"/>
        <end position="21"/>
    </location>
</feature>
<feature type="region of interest" description="Disordered" evidence="2">
    <location>
        <begin position="122"/>
        <end position="145"/>
    </location>
</feature>
<feature type="modified residue" description="Phosphothreonine" evidence="1">
    <location>
        <position position="139"/>
    </location>
</feature>
<feature type="cross-link" description="Glycyl lysine isopeptide (Lys-Gly) (interchain with G-Cter in SUMO2)" evidence="1">
    <location>
        <position position="136"/>
    </location>
</feature>
<sequence length="145" mass="17258">MKFNPFVTSDRSKNRKRHFNAPSHIRRKIMSSPLSKELRQKYNVRSMPIRKDDEVQVVRGHYKGQQIGKVVQVYRKKYVIYIERVQREKANGTTVHVGIHPSKVVITRLKLDKDRKKILERKAKSRQVGKEKGKYKEETIEKMQE</sequence>
<organism>
    <name type="scientific">Macaca fascicularis</name>
    <name type="common">Crab-eating macaque</name>
    <name type="synonym">Cynomolgus monkey</name>
    <dbReference type="NCBI Taxonomy" id="9541"/>
    <lineage>
        <taxon>Eukaryota</taxon>
        <taxon>Metazoa</taxon>
        <taxon>Chordata</taxon>
        <taxon>Craniata</taxon>
        <taxon>Vertebrata</taxon>
        <taxon>Euteleostomi</taxon>
        <taxon>Mammalia</taxon>
        <taxon>Eutheria</taxon>
        <taxon>Euarchontoglires</taxon>
        <taxon>Primates</taxon>
        <taxon>Haplorrhini</taxon>
        <taxon>Catarrhini</taxon>
        <taxon>Cercopithecidae</taxon>
        <taxon>Cercopithecinae</taxon>
        <taxon>Macaca</taxon>
    </lineage>
</organism>
<keyword id="KW-0963">Cytoplasm</keyword>
<keyword id="KW-1017">Isopeptide bond</keyword>
<keyword id="KW-0597">Phosphoprotein</keyword>
<keyword id="KW-1185">Reference proteome</keyword>
<keyword id="KW-0687">Ribonucleoprotein</keyword>
<keyword id="KW-0689">Ribosomal protein</keyword>
<keyword id="KW-0832">Ubl conjugation</keyword>